<reference key="1">
    <citation type="journal article" date="2000" name="Nucleic Acids Res.">
        <title>Genome sequences of Chlamydia trachomatis MoPn and Chlamydia pneumoniae AR39.</title>
        <authorList>
            <person name="Read T.D."/>
            <person name="Brunham R.C."/>
            <person name="Shen C."/>
            <person name="Gill S.R."/>
            <person name="Heidelberg J.F."/>
            <person name="White O."/>
            <person name="Hickey E.K."/>
            <person name="Peterson J.D."/>
            <person name="Utterback T.R."/>
            <person name="Berry K.J."/>
            <person name="Bass S."/>
            <person name="Linher K.D."/>
            <person name="Weidman J.F."/>
            <person name="Khouri H.M."/>
            <person name="Craven B."/>
            <person name="Bowman C."/>
            <person name="Dodson R.J."/>
            <person name="Gwinn M.L."/>
            <person name="Nelson W.C."/>
            <person name="DeBoy R.T."/>
            <person name="Kolonay J.F."/>
            <person name="McClarty G."/>
            <person name="Salzberg S.L."/>
            <person name="Eisen J.A."/>
            <person name="Fraser C.M."/>
        </authorList>
    </citation>
    <scope>NUCLEOTIDE SEQUENCE [LARGE SCALE GENOMIC DNA]</scope>
    <source>
        <strain>MoPn / Nigg</strain>
    </source>
</reference>
<feature type="chain" id="PRO_0000171169" description="Probable metal transport system membrane protein TC_0698">
    <location>
        <begin position="1"/>
        <end position="293"/>
    </location>
</feature>
<feature type="transmembrane region" description="Helical" evidence="1">
    <location>
        <begin position="18"/>
        <end position="38"/>
    </location>
</feature>
<feature type="transmembrane region" description="Helical" evidence="1">
    <location>
        <begin position="41"/>
        <end position="61"/>
    </location>
</feature>
<feature type="transmembrane region" description="Helical" evidence="1">
    <location>
        <begin position="68"/>
        <end position="88"/>
    </location>
</feature>
<feature type="transmembrane region" description="Helical" evidence="1">
    <location>
        <begin position="101"/>
        <end position="121"/>
    </location>
</feature>
<feature type="transmembrane region" description="Helical" evidence="1">
    <location>
        <begin position="142"/>
        <end position="162"/>
    </location>
</feature>
<feature type="transmembrane region" description="Helical" evidence="1">
    <location>
        <begin position="186"/>
        <end position="206"/>
    </location>
</feature>
<feature type="transmembrane region" description="Helical" evidence="1">
    <location>
        <begin position="242"/>
        <end position="262"/>
    </location>
</feature>
<organism>
    <name type="scientific">Chlamydia muridarum (strain MoPn / Nigg)</name>
    <dbReference type="NCBI Taxonomy" id="243161"/>
    <lineage>
        <taxon>Bacteria</taxon>
        <taxon>Pseudomonadati</taxon>
        <taxon>Chlamydiota</taxon>
        <taxon>Chlamydiia</taxon>
        <taxon>Chlamydiales</taxon>
        <taxon>Chlamydiaceae</taxon>
        <taxon>Chlamydia/Chlamydophila group</taxon>
        <taxon>Chlamydia</taxon>
    </lineage>
</organism>
<protein>
    <recommendedName>
        <fullName>Probable metal transport system membrane protein TC_0698</fullName>
    </recommendedName>
</protein>
<name>Y698_CHLMU</name>
<proteinExistence type="inferred from homology"/>
<comment type="function">
    <text>Part of an ATP-driven transport system TC_0696/TC_0697/TC_0698 for a metal.</text>
</comment>
<comment type="subcellular location">
    <subcellularLocation>
        <location evidence="2">Cell inner membrane</location>
        <topology evidence="2">Multi-pass membrane protein</topology>
    </subcellularLocation>
</comment>
<comment type="similarity">
    <text evidence="2">Belongs to the ABC-3 integral membrane protein family.</text>
</comment>
<dbReference type="EMBL" id="AE002160">
    <property type="protein sequence ID" value="AAF39513.1"/>
    <property type="molecule type" value="Genomic_DNA"/>
</dbReference>
<dbReference type="PIR" id="D81673">
    <property type="entry name" value="D81673"/>
</dbReference>
<dbReference type="RefSeq" id="WP_010231254.1">
    <property type="nucleotide sequence ID" value="NZ_CP063055.1"/>
</dbReference>
<dbReference type="SMR" id="Q9PJX8"/>
<dbReference type="GeneID" id="1246060"/>
<dbReference type="KEGG" id="cmu:TC_0698"/>
<dbReference type="eggNOG" id="COG1108">
    <property type="taxonomic scope" value="Bacteria"/>
</dbReference>
<dbReference type="HOGENOM" id="CLU_028808_3_0_0"/>
<dbReference type="OrthoDB" id="9798540at2"/>
<dbReference type="Proteomes" id="UP000000800">
    <property type="component" value="Chromosome"/>
</dbReference>
<dbReference type="GO" id="GO:0043190">
    <property type="term" value="C:ATP-binding cassette (ABC) transporter complex"/>
    <property type="evidence" value="ECO:0007669"/>
    <property type="project" value="InterPro"/>
</dbReference>
<dbReference type="GO" id="GO:0010043">
    <property type="term" value="P:response to zinc ion"/>
    <property type="evidence" value="ECO:0007669"/>
    <property type="project" value="TreeGrafter"/>
</dbReference>
<dbReference type="GO" id="GO:0055085">
    <property type="term" value="P:transmembrane transport"/>
    <property type="evidence" value="ECO:0007669"/>
    <property type="project" value="InterPro"/>
</dbReference>
<dbReference type="CDD" id="cd06550">
    <property type="entry name" value="TM_ABC_iron-siderophores_like"/>
    <property type="match status" value="1"/>
</dbReference>
<dbReference type="Gene3D" id="1.10.3470.10">
    <property type="entry name" value="ABC transporter involved in vitamin B12 uptake, BtuC"/>
    <property type="match status" value="1"/>
</dbReference>
<dbReference type="InterPro" id="IPR037294">
    <property type="entry name" value="ABC_BtuC-like"/>
</dbReference>
<dbReference type="InterPro" id="IPR001626">
    <property type="entry name" value="ABC_TroCD"/>
</dbReference>
<dbReference type="PANTHER" id="PTHR30477">
    <property type="entry name" value="ABC-TRANSPORTER METAL-BINDING PROTEIN"/>
    <property type="match status" value="1"/>
</dbReference>
<dbReference type="PANTHER" id="PTHR30477:SF18">
    <property type="entry name" value="METAL TRANSPORT SYSTEM MEMBRANE PROTEIN CT_417-RELATED"/>
    <property type="match status" value="1"/>
</dbReference>
<dbReference type="Pfam" id="PF00950">
    <property type="entry name" value="ABC-3"/>
    <property type="match status" value="1"/>
</dbReference>
<dbReference type="SUPFAM" id="SSF81345">
    <property type="entry name" value="ABC transporter involved in vitamin B12 uptake, BtuC"/>
    <property type="match status" value="1"/>
</dbReference>
<evidence type="ECO:0000255" key="1"/>
<evidence type="ECO:0000305" key="2"/>
<gene>
    <name type="ordered locus">TC_0698</name>
</gene>
<keyword id="KW-0997">Cell inner membrane</keyword>
<keyword id="KW-1003">Cell membrane</keyword>
<keyword id="KW-0472">Membrane</keyword>
<keyword id="KW-0812">Transmembrane</keyword>
<keyword id="KW-1133">Transmembrane helix</keyword>
<keyword id="KW-0813">Transport</keyword>
<sequence>MLMISILYSLFPPLLFPSLLAAFGASIAGGIVGSYIVVKRIVSISGSIAHSILGGVGIALWLQYQFDLPISPLHGAIASAIFVAICIGNVHLKYHEREDSIISMIWSIGMAVGMLCISKLPSFNSDLADFLFGNILWVTSRDLYFLGILDLLIVATVSICHTRFLALCFDEKYMALNRYSIKAWYFLLLILTAITTVVLMYVMGVILMLSMLVLPVSIACRFSYKMSSIIFTASILNICCSFLGIILAYILDLPVGPIIAILMGIAYSLSLLLKRSCNTSTPSPVSPESKINS</sequence>
<accession>Q9PJX8</accession>